<dbReference type="EC" id="3.2.1.99"/>
<dbReference type="EMBL" id="DQ490514">
    <property type="protein sequence ID" value="ABF50890.1"/>
    <property type="molecule type" value="mRNA"/>
</dbReference>
<dbReference type="EMBL" id="AACD01000138">
    <property type="protein sequence ID" value="EAA58810.1"/>
    <property type="molecule type" value="Genomic_DNA"/>
</dbReference>
<dbReference type="EMBL" id="BN001302">
    <property type="protein sequence ID" value="CBF73694.1"/>
    <property type="molecule type" value="Genomic_DNA"/>
</dbReference>
<dbReference type="RefSeq" id="XP_681276.1">
    <property type="nucleotide sequence ID" value="XM_676184.1"/>
</dbReference>
<dbReference type="SMR" id="Q5AUM3"/>
<dbReference type="STRING" id="227321.Q5AUM3"/>
<dbReference type="CAZy" id="GH43">
    <property type="family name" value="Glycoside Hydrolase Family 43"/>
</dbReference>
<dbReference type="GlyCosmos" id="Q5AUM3">
    <property type="glycosylation" value="2 sites, No reported glycans"/>
</dbReference>
<dbReference type="EnsemblFungi" id="CBF73694">
    <property type="protein sequence ID" value="CBF73694"/>
    <property type="gene ID" value="ANIA_08007"/>
</dbReference>
<dbReference type="KEGG" id="ani:ANIA_08007"/>
<dbReference type="VEuPathDB" id="FungiDB:AN8007"/>
<dbReference type="eggNOG" id="ENOG502QTQG">
    <property type="taxonomic scope" value="Eukaryota"/>
</dbReference>
<dbReference type="HOGENOM" id="CLU_009397_5_0_1"/>
<dbReference type="InParanoid" id="Q5AUM3"/>
<dbReference type="OMA" id="EDYQFGW"/>
<dbReference type="OrthoDB" id="195678at2759"/>
<dbReference type="UniPathway" id="UPA00667"/>
<dbReference type="Proteomes" id="UP000000560">
    <property type="component" value="Chromosome II"/>
</dbReference>
<dbReference type="GO" id="GO:0005576">
    <property type="term" value="C:extracellular region"/>
    <property type="evidence" value="ECO:0007669"/>
    <property type="project" value="UniProtKB-SubCell"/>
</dbReference>
<dbReference type="GO" id="GO:0046558">
    <property type="term" value="F:arabinan endo-1,5-alpha-L-arabinosidase activity"/>
    <property type="evidence" value="ECO:0000314"/>
    <property type="project" value="UniProtKB"/>
</dbReference>
<dbReference type="GO" id="GO:0031222">
    <property type="term" value="P:arabinan catabolic process"/>
    <property type="evidence" value="ECO:0007669"/>
    <property type="project" value="UniProtKB-UniPathway"/>
</dbReference>
<dbReference type="GO" id="GO:0045490">
    <property type="term" value="P:pectin catabolic process"/>
    <property type="evidence" value="ECO:0000314"/>
    <property type="project" value="UniProtKB"/>
</dbReference>
<dbReference type="GO" id="GO:0045493">
    <property type="term" value="P:xylan catabolic process"/>
    <property type="evidence" value="ECO:0007669"/>
    <property type="project" value="UniProtKB-KW"/>
</dbReference>
<dbReference type="CDD" id="cd18831">
    <property type="entry name" value="GH43_AnAbnA-like"/>
    <property type="match status" value="1"/>
</dbReference>
<dbReference type="FunFam" id="2.115.10.20:FF:000005">
    <property type="entry name" value="Arabinan endo-1,5-alpha-L-arabinosidase"/>
    <property type="match status" value="1"/>
</dbReference>
<dbReference type="Gene3D" id="2.115.10.20">
    <property type="entry name" value="Glycosyl hydrolase domain, family 43"/>
    <property type="match status" value="1"/>
</dbReference>
<dbReference type="InterPro" id="IPR050727">
    <property type="entry name" value="GH43_arabinanases"/>
</dbReference>
<dbReference type="InterPro" id="IPR006710">
    <property type="entry name" value="Glyco_hydro_43"/>
</dbReference>
<dbReference type="InterPro" id="IPR016840">
    <property type="entry name" value="Glyco_hydro_43_endo_a_Ara-ase"/>
</dbReference>
<dbReference type="InterPro" id="IPR023296">
    <property type="entry name" value="Glyco_hydro_beta-prop_sf"/>
</dbReference>
<dbReference type="PANTHER" id="PTHR43301">
    <property type="entry name" value="ARABINAN ENDO-1,5-ALPHA-L-ARABINOSIDASE"/>
    <property type="match status" value="1"/>
</dbReference>
<dbReference type="PANTHER" id="PTHR43301:SF7">
    <property type="entry name" value="ARABINAN ENDO-1,5-ALPHA-L-ARABINOSIDASE C"/>
    <property type="match status" value="1"/>
</dbReference>
<dbReference type="Pfam" id="PF04616">
    <property type="entry name" value="Glyco_hydro_43"/>
    <property type="match status" value="1"/>
</dbReference>
<dbReference type="PIRSF" id="PIRSF026534">
    <property type="entry name" value="Endo_alpha-L-arabinosidase"/>
    <property type="match status" value="1"/>
</dbReference>
<dbReference type="SUPFAM" id="SSF75005">
    <property type="entry name" value="Arabinanase/levansucrase/invertase"/>
    <property type="match status" value="1"/>
</dbReference>
<protein>
    <recommendedName>
        <fullName>Arabinan endo-1,5-alpha-L-arabinosidase C</fullName>
        <ecNumber>3.2.1.99</ecNumber>
    </recommendedName>
    <alternativeName>
        <fullName>Endo-1,5-alpha-L-arabinanase C</fullName>
        <shortName>ABN C</shortName>
    </alternativeName>
</protein>
<organism>
    <name type="scientific">Emericella nidulans (strain FGSC A4 / ATCC 38163 / CBS 112.46 / NRRL 194 / M139)</name>
    <name type="common">Aspergillus nidulans</name>
    <dbReference type="NCBI Taxonomy" id="227321"/>
    <lineage>
        <taxon>Eukaryota</taxon>
        <taxon>Fungi</taxon>
        <taxon>Dikarya</taxon>
        <taxon>Ascomycota</taxon>
        <taxon>Pezizomycotina</taxon>
        <taxon>Eurotiomycetes</taxon>
        <taxon>Eurotiomycetidae</taxon>
        <taxon>Eurotiales</taxon>
        <taxon>Aspergillaceae</taxon>
        <taxon>Aspergillus</taxon>
        <taxon>Aspergillus subgen. Nidulantes</taxon>
    </lineage>
</organism>
<proteinExistence type="evidence at transcript level"/>
<gene>
    <name type="primary">abnC</name>
    <name type="ORF">AN8007</name>
</gene>
<accession>Q5AUM3</accession>
<accession>C8V5S3</accession>
<accession>Q1HFR0</accession>
<reference key="1">
    <citation type="journal article" date="2006" name="Proc. Natl. Acad. Sci. U.S.A.">
        <title>Development and application of a suite of polysaccharide-degrading enzymes for analyzing plant cell walls.</title>
        <authorList>
            <person name="Bauer S."/>
            <person name="Vasu P."/>
            <person name="Persson S."/>
            <person name="Mort A.J."/>
            <person name="Somerville C.R."/>
        </authorList>
    </citation>
    <scope>NUCLEOTIDE SEQUENCE [MRNA]</scope>
    <scope>FUNCTION</scope>
    <source>
        <strain>FGSC A4 / ATCC 38163 / CBS 112.46 / NRRL 194 / M139</strain>
    </source>
</reference>
<reference key="2">
    <citation type="journal article" date="2005" name="Nature">
        <title>Sequencing of Aspergillus nidulans and comparative analysis with A. fumigatus and A. oryzae.</title>
        <authorList>
            <person name="Galagan J.E."/>
            <person name="Calvo S.E."/>
            <person name="Cuomo C."/>
            <person name="Ma L.-J."/>
            <person name="Wortman J.R."/>
            <person name="Batzoglou S."/>
            <person name="Lee S.-I."/>
            <person name="Bastuerkmen M."/>
            <person name="Spevak C.C."/>
            <person name="Clutterbuck J."/>
            <person name="Kapitonov V."/>
            <person name="Jurka J."/>
            <person name="Scazzocchio C."/>
            <person name="Farman M.L."/>
            <person name="Butler J."/>
            <person name="Purcell S."/>
            <person name="Harris S."/>
            <person name="Braus G.H."/>
            <person name="Draht O."/>
            <person name="Busch S."/>
            <person name="D'Enfert C."/>
            <person name="Bouchier C."/>
            <person name="Goldman G.H."/>
            <person name="Bell-Pedersen D."/>
            <person name="Griffiths-Jones S."/>
            <person name="Doonan J.H."/>
            <person name="Yu J."/>
            <person name="Vienken K."/>
            <person name="Pain A."/>
            <person name="Freitag M."/>
            <person name="Selker E.U."/>
            <person name="Archer D.B."/>
            <person name="Penalva M.A."/>
            <person name="Oakley B.R."/>
            <person name="Momany M."/>
            <person name="Tanaka T."/>
            <person name="Kumagai T."/>
            <person name="Asai K."/>
            <person name="Machida M."/>
            <person name="Nierman W.C."/>
            <person name="Denning D.W."/>
            <person name="Caddick M.X."/>
            <person name="Hynes M."/>
            <person name="Paoletti M."/>
            <person name="Fischer R."/>
            <person name="Miller B.L."/>
            <person name="Dyer P.S."/>
            <person name="Sachs M.S."/>
            <person name="Osmani S.A."/>
            <person name="Birren B.W."/>
        </authorList>
    </citation>
    <scope>NUCLEOTIDE SEQUENCE [LARGE SCALE GENOMIC DNA]</scope>
    <source>
        <strain>FGSC A4 / ATCC 38163 / CBS 112.46 / NRRL 194 / M139</strain>
    </source>
</reference>
<reference key="3">
    <citation type="journal article" date="2009" name="Fungal Genet. Biol.">
        <title>The 2008 update of the Aspergillus nidulans genome annotation: a community effort.</title>
        <authorList>
            <person name="Wortman J.R."/>
            <person name="Gilsenan J.M."/>
            <person name="Joardar V."/>
            <person name="Deegan J."/>
            <person name="Clutterbuck J."/>
            <person name="Andersen M.R."/>
            <person name="Archer D."/>
            <person name="Bencina M."/>
            <person name="Braus G."/>
            <person name="Coutinho P."/>
            <person name="von Dohren H."/>
            <person name="Doonan J."/>
            <person name="Driessen A.J."/>
            <person name="Durek P."/>
            <person name="Espeso E."/>
            <person name="Fekete E."/>
            <person name="Flipphi M."/>
            <person name="Estrada C.G."/>
            <person name="Geysens S."/>
            <person name="Goldman G."/>
            <person name="de Groot P.W."/>
            <person name="Hansen K."/>
            <person name="Harris S.D."/>
            <person name="Heinekamp T."/>
            <person name="Helmstaedt K."/>
            <person name="Henrissat B."/>
            <person name="Hofmann G."/>
            <person name="Homan T."/>
            <person name="Horio T."/>
            <person name="Horiuchi H."/>
            <person name="James S."/>
            <person name="Jones M."/>
            <person name="Karaffa L."/>
            <person name="Karanyi Z."/>
            <person name="Kato M."/>
            <person name="Keller N."/>
            <person name="Kelly D.E."/>
            <person name="Kiel J.A."/>
            <person name="Kim J.M."/>
            <person name="van der Klei I.J."/>
            <person name="Klis F.M."/>
            <person name="Kovalchuk A."/>
            <person name="Krasevec N."/>
            <person name="Kubicek C.P."/>
            <person name="Liu B."/>
            <person name="Maccabe A."/>
            <person name="Meyer V."/>
            <person name="Mirabito P."/>
            <person name="Miskei M."/>
            <person name="Mos M."/>
            <person name="Mullins J."/>
            <person name="Nelson D.R."/>
            <person name="Nielsen J."/>
            <person name="Oakley B.R."/>
            <person name="Osmani S.A."/>
            <person name="Pakula T."/>
            <person name="Paszewski A."/>
            <person name="Paulsen I."/>
            <person name="Pilsyk S."/>
            <person name="Pocsi I."/>
            <person name="Punt P.J."/>
            <person name="Ram A.F."/>
            <person name="Ren Q."/>
            <person name="Robellet X."/>
            <person name="Robson G."/>
            <person name="Seiboth B."/>
            <person name="van Solingen P."/>
            <person name="Specht T."/>
            <person name="Sun J."/>
            <person name="Taheri-Talesh N."/>
            <person name="Takeshita N."/>
            <person name="Ussery D."/>
            <person name="vanKuyk P.A."/>
            <person name="Visser H."/>
            <person name="van de Vondervoort P.J."/>
            <person name="de Vries R.P."/>
            <person name="Walton J."/>
            <person name="Xiang X."/>
            <person name="Xiong Y."/>
            <person name="Zeng A.P."/>
            <person name="Brandt B.W."/>
            <person name="Cornell M.J."/>
            <person name="van den Hondel C.A."/>
            <person name="Visser J."/>
            <person name="Oliver S.G."/>
            <person name="Turner G."/>
        </authorList>
    </citation>
    <scope>GENOME REANNOTATION</scope>
    <source>
        <strain>FGSC A4 / ATCC 38163 / CBS 112.46 / NRRL 194 / M139</strain>
    </source>
</reference>
<feature type="signal peptide" evidence="3">
    <location>
        <begin position="1"/>
        <end position="15"/>
    </location>
</feature>
<feature type="chain" id="PRO_0000394638" description="Arabinan endo-1,5-alpha-L-arabinosidase C">
    <location>
        <begin position="16"/>
        <end position="320"/>
    </location>
</feature>
<feature type="active site" description="Proton acceptor" evidence="2">
    <location>
        <position position="31"/>
    </location>
</feature>
<feature type="active site" description="Proton donor" evidence="2">
    <location>
        <position position="198"/>
    </location>
</feature>
<feature type="site" description="Important for catalytic activity, responsible for pKa modulation of the active site Glu and correct orientation of both the proton donor and substrate" evidence="2">
    <location>
        <position position="146"/>
    </location>
</feature>
<feature type="glycosylation site" description="N-linked (GlcNAc...) asparagine" evidence="3">
    <location>
        <position position="126"/>
    </location>
</feature>
<feature type="glycosylation site" description="N-linked (GlcNAc...) asparagine" evidence="3">
    <location>
        <position position="190"/>
    </location>
</feature>
<keyword id="KW-0119">Carbohydrate metabolism</keyword>
<keyword id="KW-0325">Glycoprotein</keyword>
<keyword id="KW-0326">Glycosidase</keyword>
<keyword id="KW-0378">Hydrolase</keyword>
<keyword id="KW-0624">Polysaccharide degradation</keyword>
<keyword id="KW-1185">Reference proteome</keyword>
<keyword id="KW-0964">Secreted</keyword>
<keyword id="KW-0732">Signal</keyword>
<keyword id="KW-0858">Xylan degradation</keyword>
<comment type="function">
    <text evidence="4">Endo-1,5-alpha-L-arabinanase involved in degradation of pectin. Its preferred substrate is linear 1,5-alpha-L-arabinan.</text>
</comment>
<comment type="catalytic activity">
    <reaction>
        <text>Endohydrolysis of (1-&gt;5)-alpha-arabinofuranosidic linkages in (1-&gt;5)-arabinans.</text>
        <dbReference type="EC" id="3.2.1.99"/>
    </reaction>
</comment>
<comment type="pathway">
    <text>Glycan metabolism; L-arabinan degradation.</text>
</comment>
<comment type="subcellular location">
    <subcellularLocation>
        <location evidence="1">Secreted</location>
    </subcellularLocation>
</comment>
<comment type="similarity">
    <text evidence="5">Belongs to the glycosyl hydrolase 43 family.</text>
</comment>
<evidence type="ECO:0000250" key="1"/>
<evidence type="ECO:0000250" key="2">
    <source>
        <dbReference type="UniProtKB" id="P94522"/>
    </source>
</evidence>
<evidence type="ECO:0000255" key="3"/>
<evidence type="ECO:0000269" key="4">
    <source>
    </source>
</evidence>
<evidence type="ECO:0000305" key="5"/>
<name>ABNC_EMENI</name>
<sequence>MKLALSLFLLSGSLAQYSNPGACSGDCWGHDPGFYQRVSDGRYYRFSTGGGIQIHASDNLEGPWEAVGEALPGGSVVDHAGSTNLWAPDIHYEASTNLYYMYYSVSTLGSRDSVIGVATSPNLQPNWTDHGALFRSQAGGNYNAIDANWASIGGSPILTFGSYWNGIHQLPLAGPLSLADGATPTQIAYNSSGNHAIEAGFVFYRRGWYYLTFSSGRAGSYDTNPPATGEEYRIVVCRSASGTGDFVDKSGRSCLTDNGGTTILASHGNVYGPGGQGVFEDRTRGWVLYYHYANPDIGLSTGQYQFGWNVLQWADGWPSV</sequence>